<name>RSGA_STAAM</name>
<accession>P67681</accession>
<accession>Q99UP7</accession>
<sequence length="291" mass="33875">MKTGRIVKSISGVYQVDVNGERFNTKPRGLFRKKKFSPVVGDIVEFEVQNINEGYIHQVFERKNELKRPPVSNIDTLVIVMSAVEPNFSTQLLDRFLVIAHSYQLNARVLVTKKDKTPIEKQFEINELLKIYENIGYETEFIGNDDDRKKIVEAWPAGLIVLSGQSGVGKSTFLNHYRPELNLETNDISKSLNRGKHTTRHVELFERQNGYIADTPGFSALDFDHIDKDEIKDYFLELNRYGETCKFRNCNHIKEPNCNVKHQLEIGNIAQFRYDHYLQLFNEISNRKVRY</sequence>
<feature type="chain" id="PRO_0000171514" description="Small ribosomal subunit biogenesis GTPase RsgA">
    <location>
        <begin position="1"/>
        <end position="291"/>
    </location>
</feature>
<feature type="domain" description="CP-type G" evidence="2">
    <location>
        <begin position="63"/>
        <end position="221"/>
    </location>
</feature>
<feature type="binding site" evidence="1">
    <location>
        <begin position="112"/>
        <end position="115"/>
    </location>
    <ligand>
        <name>GTP</name>
        <dbReference type="ChEBI" id="CHEBI:37565"/>
    </ligand>
</feature>
<feature type="binding site" evidence="1">
    <location>
        <begin position="164"/>
        <end position="172"/>
    </location>
    <ligand>
        <name>GTP</name>
        <dbReference type="ChEBI" id="CHEBI:37565"/>
    </ligand>
</feature>
<feature type="binding site" evidence="1">
    <location>
        <position position="245"/>
    </location>
    <ligand>
        <name>Zn(2+)</name>
        <dbReference type="ChEBI" id="CHEBI:29105"/>
    </ligand>
</feature>
<feature type="binding site" evidence="1">
    <location>
        <position position="250"/>
    </location>
    <ligand>
        <name>Zn(2+)</name>
        <dbReference type="ChEBI" id="CHEBI:29105"/>
    </ligand>
</feature>
<feature type="binding site" evidence="1">
    <location>
        <position position="252"/>
    </location>
    <ligand>
        <name>Zn(2+)</name>
        <dbReference type="ChEBI" id="CHEBI:29105"/>
    </ligand>
</feature>
<feature type="binding site" evidence="1">
    <location>
        <position position="258"/>
    </location>
    <ligand>
        <name>Zn(2+)</name>
        <dbReference type="ChEBI" id="CHEBI:29105"/>
    </ligand>
</feature>
<proteinExistence type="inferred from homology"/>
<organism>
    <name type="scientific">Staphylococcus aureus (strain Mu50 / ATCC 700699)</name>
    <dbReference type="NCBI Taxonomy" id="158878"/>
    <lineage>
        <taxon>Bacteria</taxon>
        <taxon>Bacillati</taxon>
        <taxon>Bacillota</taxon>
        <taxon>Bacilli</taxon>
        <taxon>Bacillales</taxon>
        <taxon>Staphylococcaceae</taxon>
        <taxon>Staphylococcus</taxon>
    </lineage>
</organism>
<dbReference type="EC" id="3.6.1.-" evidence="1"/>
<dbReference type="EMBL" id="BA000017">
    <property type="protein sequence ID" value="BAB57383.1"/>
    <property type="molecule type" value="Genomic_DNA"/>
</dbReference>
<dbReference type="RefSeq" id="WP_000847936.1">
    <property type="nucleotide sequence ID" value="NC_002758.2"/>
</dbReference>
<dbReference type="SMR" id="P67681"/>
<dbReference type="KEGG" id="sav:SAV1221"/>
<dbReference type="HOGENOM" id="CLU_033617_2_1_9"/>
<dbReference type="PhylomeDB" id="P67681"/>
<dbReference type="BioCyc" id="MetaCyc:MONOMER-16818"/>
<dbReference type="Proteomes" id="UP000002481">
    <property type="component" value="Chromosome"/>
</dbReference>
<dbReference type="GO" id="GO:0005737">
    <property type="term" value="C:cytoplasm"/>
    <property type="evidence" value="ECO:0007669"/>
    <property type="project" value="UniProtKB-SubCell"/>
</dbReference>
<dbReference type="GO" id="GO:0005525">
    <property type="term" value="F:GTP binding"/>
    <property type="evidence" value="ECO:0007669"/>
    <property type="project" value="UniProtKB-UniRule"/>
</dbReference>
<dbReference type="GO" id="GO:0003924">
    <property type="term" value="F:GTPase activity"/>
    <property type="evidence" value="ECO:0007669"/>
    <property type="project" value="UniProtKB-UniRule"/>
</dbReference>
<dbReference type="GO" id="GO:0046872">
    <property type="term" value="F:metal ion binding"/>
    <property type="evidence" value="ECO:0007669"/>
    <property type="project" value="UniProtKB-KW"/>
</dbReference>
<dbReference type="GO" id="GO:0019843">
    <property type="term" value="F:rRNA binding"/>
    <property type="evidence" value="ECO:0007669"/>
    <property type="project" value="UniProtKB-KW"/>
</dbReference>
<dbReference type="GO" id="GO:0042274">
    <property type="term" value="P:ribosomal small subunit biogenesis"/>
    <property type="evidence" value="ECO:0007669"/>
    <property type="project" value="UniProtKB-UniRule"/>
</dbReference>
<dbReference type="CDD" id="cd04466">
    <property type="entry name" value="S1_YloQ_GTPase"/>
    <property type="match status" value="1"/>
</dbReference>
<dbReference type="CDD" id="cd01854">
    <property type="entry name" value="YjeQ_EngC"/>
    <property type="match status" value="1"/>
</dbReference>
<dbReference type="Gene3D" id="2.40.50.140">
    <property type="entry name" value="Nucleic acid-binding proteins"/>
    <property type="match status" value="1"/>
</dbReference>
<dbReference type="Gene3D" id="3.40.50.300">
    <property type="entry name" value="P-loop containing nucleotide triphosphate hydrolases"/>
    <property type="match status" value="1"/>
</dbReference>
<dbReference type="Gene3D" id="1.10.40.50">
    <property type="entry name" value="Probable gtpase engc, domain 3"/>
    <property type="match status" value="1"/>
</dbReference>
<dbReference type="HAMAP" id="MF_01820">
    <property type="entry name" value="GTPase_RsgA"/>
    <property type="match status" value="1"/>
</dbReference>
<dbReference type="InterPro" id="IPR030378">
    <property type="entry name" value="G_CP_dom"/>
</dbReference>
<dbReference type="InterPro" id="IPR012340">
    <property type="entry name" value="NA-bd_OB-fold"/>
</dbReference>
<dbReference type="InterPro" id="IPR027417">
    <property type="entry name" value="P-loop_NTPase"/>
</dbReference>
<dbReference type="InterPro" id="IPR004881">
    <property type="entry name" value="Ribosome_biogen_GTPase_RsgA"/>
</dbReference>
<dbReference type="InterPro" id="IPR010914">
    <property type="entry name" value="RsgA_GTPase_dom"/>
</dbReference>
<dbReference type="InterPro" id="IPR031944">
    <property type="entry name" value="RsgA_N"/>
</dbReference>
<dbReference type="NCBIfam" id="TIGR00157">
    <property type="entry name" value="ribosome small subunit-dependent GTPase A"/>
    <property type="match status" value="1"/>
</dbReference>
<dbReference type="PANTHER" id="PTHR32120">
    <property type="entry name" value="SMALL RIBOSOMAL SUBUNIT BIOGENESIS GTPASE RSGA"/>
    <property type="match status" value="1"/>
</dbReference>
<dbReference type="PANTHER" id="PTHR32120:SF11">
    <property type="entry name" value="SMALL RIBOSOMAL SUBUNIT BIOGENESIS GTPASE RSGA 1, MITOCHONDRIAL-RELATED"/>
    <property type="match status" value="1"/>
</dbReference>
<dbReference type="Pfam" id="PF03193">
    <property type="entry name" value="RsgA_GTPase"/>
    <property type="match status" value="1"/>
</dbReference>
<dbReference type="Pfam" id="PF16745">
    <property type="entry name" value="RsgA_N"/>
    <property type="match status" value="1"/>
</dbReference>
<dbReference type="SUPFAM" id="SSF50249">
    <property type="entry name" value="Nucleic acid-binding proteins"/>
    <property type="match status" value="1"/>
</dbReference>
<dbReference type="SUPFAM" id="SSF52540">
    <property type="entry name" value="P-loop containing nucleoside triphosphate hydrolases"/>
    <property type="match status" value="1"/>
</dbReference>
<dbReference type="PROSITE" id="PS50936">
    <property type="entry name" value="ENGC_GTPASE"/>
    <property type="match status" value="1"/>
</dbReference>
<dbReference type="PROSITE" id="PS51721">
    <property type="entry name" value="G_CP"/>
    <property type="match status" value="1"/>
</dbReference>
<evidence type="ECO:0000255" key="1">
    <source>
        <dbReference type="HAMAP-Rule" id="MF_01820"/>
    </source>
</evidence>
<evidence type="ECO:0000255" key="2">
    <source>
        <dbReference type="PROSITE-ProRule" id="PRU01058"/>
    </source>
</evidence>
<gene>
    <name evidence="1" type="primary">rsgA</name>
    <name type="ordered locus">SAV1221</name>
</gene>
<comment type="function">
    <text evidence="1">One of several proteins that assist in the late maturation steps of the functional core of the 30S ribosomal subunit. Helps release RbfA from mature subunits. May play a role in the assembly of ribosomal proteins into the subunit. Circularly permuted GTPase that catalyzes slow GTP hydrolysis, GTPase activity is stimulated by the 30S ribosomal subunit.</text>
</comment>
<comment type="cofactor">
    <cofactor evidence="1">
        <name>Zn(2+)</name>
        <dbReference type="ChEBI" id="CHEBI:29105"/>
    </cofactor>
    <text evidence="1">Binds 1 zinc ion per subunit.</text>
</comment>
<comment type="subunit">
    <text evidence="1">Monomer. Associates with 30S ribosomal subunit, binds 16S rRNA.</text>
</comment>
<comment type="subcellular location">
    <subcellularLocation>
        <location evidence="1">Cytoplasm</location>
    </subcellularLocation>
</comment>
<comment type="similarity">
    <text evidence="1">Belongs to the TRAFAC class YlqF/YawG GTPase family. RsgA subfamily.</text>
</comment>
<reference key="1">
    <citation type="journal article" date="2001" name="Lancet">
        <title>Whole genome sequencing of meticillin-resistant Staphylococcus aureus.</title>
        <authorList>
            <person name="Kuroda M."/>
            <person name="Ohta T."/>
            <person name="Uchiyama I."/>
            <person name="Baba T."/>
            <person name="Yuzawa H."/>
            <person name="Kobayashi I."/>
            <person name="Cui L."/>
            <person name="Oguchi A."/>
            <person name="Aoki K."/>
            <person name="Nagai Y."/>
            <person name="Lian J.-Q."/>
            <person name="Ito T."/>
            <person name="Kanamori M."/>
            <person name="Matsumaru H."/>
            <person name="Maruyama A."/>
            <person name="Murakami H."/>
            <person name="Hosoyama A."/>
            <person name="Mizutani-Ui Y."/>
            <person name="Takahashi N.K."/>
            <person name="Sawano T."/>
            <person name="Inoue R."/>
            <person name="Kaito C."/>
            <person name="Sekimizu K."/>
            <person name="Hirakawa H."/>
            <person name="Kuhara S."/>
            <person name="Goto S."/>
            <person name="Yabuzaki J."/>
            <person name="Kanehisa M."/>
            <person name="Yamashita A."/>
            <person name="Oshima K."/>
            <person name="Furuya K."/>
            <person name="Yoshino C."/>
            <person name="Shiba T."/>
            <person name="Hattori M."/>
            <person name="Ogasawara N."/>
            <person name="Hayashi H."/>
            <person name="Hiramatsu K."/>
        </authorList>
    </citation>
    <scope>NUCLEOTIDE SEQUENCE [LARGE SCALE GENOMIC DNA]</scope>
    <source>
        <strain>Mu50 / ATCC 700699</strain>
    </source>
</reference>
<protein>
    <recommendedName>
        <fullName evidence="1">Small ribosomal subunit biogenesis GTPase RsgA</fullName>
        <ecNumber evidence="1">3.6.1.-</ecNumber>
    </recommendedName>
</protein>
<keyword id="KW-0963">Cytoplasm</keyword>
<keyword id="KW-0342">GTP-binding</keyword>
<keyword id="KW-0378">Hydrolase</keyword>
<keyword id="KW-0479">Metal-binding</keyword>
<keyword id="KW-0547">Nucleotide-binding</keyword>
<keyword id="KW-0690">Ribosome biogenesis</keyword>
<keyword id="KW-0694">RNA-binding</keyword>
<keyword id="KW-0699">rRNA-binding</keyword>
<keyword id="KW-0862">Zinc</keyword>